<reference key="1">
    <citation type="journal article" date="2009" name="J. Bacteriol.">
        <title>Complete and draft genome sequences of six members of the Aquificales.</title>
        <authorList>
            <person name="Reysenbach A.-L."/>
            <person name="Hamamura N."/>
            <person name="Podar M."/>
            <person name="Griffiths E."/>
            <person name="Ferreira S."/>
            <person name="Hochstein R."/>
            <person name="Heidelberg J."/>
            <person name="Johnson J."/>
            <person name="Mead D."/>
            <person name="Pohorille A."/>
            <person name="Sarmiento M."/>
            <person name="Schweighofer K."/>
            <person name="Seshadri R."/>
            <person name="Voytek M.A."/>
        </authorList>
    </citation>
    <scope>NUCLEOTIDE SEQUENCE [LARGE SCALE GENOMIC DNA]</scope>
    <source>
        <strain>YO3AOP1</strain>
    </source>
</reference>
<organism>
    <name type="scientific">Sulfurihydrogenibium sp. (strain YO3AOP1)</name>
    <dbReference type="NCBI Taxonomy" id="436114"/>
    <lineage>
        <taxon>Bacteria</taxon>
        <taxon>Pseudomonadati</taxon>
        <taxon>Aquificota</taxon>
        <taxon>Aquificia</taxon>
        <taxon>Aquificales</taxon>
        <taxon>Hydrogenothermaceae</taxon>
        <taxon>Sulfurihydrogenibium</taxon>
    </lineage>
</organism>
<name>RS7_SULSY</name>
<gene>
    <name evidence="1" type="primary">rpsG</name>
    <name type="ordered locus">SYO3AOP1_0295</name>
</gene>
<keyword id="KW-0687">Ribonucleoprotein</keyword>
<keyword id="KW-0689">Ribosomal protein</keyword>
<keyword id="KW-0694">RNA-binding</keyword>
<keyword id="KW-0699">rRNA-binding</keyword>
<keyword id="KW-0820">tRNA-binding</keyword>
<protein>
    <recommendedName>
        <fullName evidence="1">Small ribosomal subunit protein uS7</fullName>
    </recommendedName>
    <alternativeName>
        <fullName evidence="2">30S ribosomal protein S7</fullName>
    </alternativeName>
</protein>
<dbReference type="EMBL" id="CP001080">
    <property type="protein sequence ID" value="ACD65940.1"/>
    <property type="molecule type" value="Genomic_DNA"/>
</dbReference>
<dbReference type="RefSeq" id="WP_012459028.1">
    <property type="nucleotide sequence ID" value="NC_010730.1"/>
</dbReference>
<dbReference type="SMR" id="B2V7L7"/>
<dbReference type="STRING" id="436114.SYO3AOP1_0295"/>
<dbReference type="KEGG" id="sul:SYO3AOP1_0295"/>
<dbReference type="eggNOG" id="COG0049">
    <property type="taxonomic scope" value="Bacteria"/>
</dbReference>
<dbReference type="HOGENOM" id="CLU_072226_1_1_0"/>
<dbReference type="GO" id="GO:0015935">
    <property type="term" value="C:small ribosomal subunit"/>
    <property type="evidence" value="ECO:0007669"/>
    <property type="project" value="InterPro"/>
</dbReference>
<dbReference type="GO" id="GO:0019843">
    <property type="term" value="F:rRNA binding"/>
    <property type="evidence" value="ECO:0007669"/>
    <property type="project" value="UniProtKB-UniRule"/>
</dbReference>
<dbReference type="GO" id="GO:0003735">
    <property type="term" value="F:structural constituent of ribosome"/>
    <property type="evidence" value="ECO:0007669"/>
    <property type="project" value="InterPro"/>
</dbReference>
<dbReference type="GO" id="GO:0000049">
    <property type="term" value="F:tRNA binding"/>
    <property type="evidence" value="ECO:0007669"/>
    <property type="project" value="UniProtKB-UniRule"/>
</dbReference>
<dbReference type="GO" id="GO:0006412">
    <property type="term" value="P:translation"/>
    <property type="evidence" value="ECO:0007669"/>
    <property type="project" value="UniProtKB-UniRule"/>
</dbReference>
<dbReference type="CDD" id="cd14869">
    <property type="entry name" value="uS7_Bacteria"/>
    <property type="match status" value="1"/>
</dbReference>
<dbReference type="FunFam" id="1.10.455.10:FF:000001">
    <property type="entry name" value="30S ribosomal protein S7"/>
    <property type="match status" value="1"/>
</dbReference>
<dbReference type="Gene3D" id="1.10.455.10">
    <property type="entry name" value="Ribosomal protein S7 domain"/>
    <property type="match status" value="1"/>
</dbReference>
<dbReference type="HAMAP" id="MF_00480_B">
    <property type="entry name" value="Ribosomal_uS7_B"/>
    <property type="match status" value="1"/>
</dbReference>
<dbReference type="InterPro" id="IPR000235">
    <property type="entry name" value="Ribosomal_uS7"/>
</dbReference>
<dbReference type="InterPro" id="IPR005717">
    <property type="entry name" value="Ribosomal_uS7_bac/org-type"/>
</dbReference>
<dbReference type="InterPro" id="IPR020606">
    <property type="entry name" value="Ribosomal_uS7_CS"/>
</dbReference>
<dbReference type="InterPro" id="IPR023798">
    <property type="entry name" value="Ribosomal_uS7_dom"/>
</dbReference>
<dbReference type="InterPro" id="IPR036823">
    <property type="entry name" value="Ribosomal_uS7_dom_sf"/>
</dbReference>
<dbReference type="NCBIfam" id="TIGR01029">
    <property type="entry name" value="rpsG_bact"/>
    <property type="match status" value="1"/>
</dbReference>
<dbReference type="PANTHER" id="PTHR11205">
    <property type="entry name" value="RIBOSOMAL PROTEIN S7"/>
    <property type="match status" value="1"/>
</dbReference>
<dbReference type="Pfam" id="PF00177">
    <property type="entry name" value="Ribosomal_S7"/>
    <property type="match status" value="1"/>
</dbReference>
<dbReference type="PIRSF" id="PIRSF002122">
    <property type="entry name" value="RPS7p_RPS7a_RPS5e_RPS7o"/>
    <property type="match status" value="1"/>
</dbReference>
<dbReference type="SUPFAM" id="SSF47973">
    <property type="entry name" value="Ribosomal protein S7"/>
    <property type="match status" value="1"/>
</dbReference>
<dbReference type="PROSITE" id="PS00052">
    <property type="entry name" value="RIBOSOMAL_S7"/>
    <property type="match status" value="1"/>
</dbReference>
<feature type="chain" id="PRO_1000126012" description="Small ribosomal subunit protein uS7">
    <location>
        <begin position="1"/>
        <end position="159"/>
    </location>
</feature>
<proteinExistence type="inferred from homology"/>
<accession>B2V7L7</accession>
<sequence length="159" mass="18287">MPRKGPVKPREIMPDPIYRDVLVHKLINKVMVDGKKSKAEKIVYGAMQILAEKTGEQPLEALHKAIENLKPILEVRPRRVGGATYQVPMEVPPRRQISLALRWLVEAARNRSGRGNYTMLEKLSNELLDAYHNRGNAIKKREDTHRMAEANKAFAHYKW</sequence>
<comment type="function">
    <text evidence="1">One of the primary rRNA binding proteins, it binds directly to 16S rRNA where it nucleates assembly of the head domain of the 30S subunit. Is located at the subunit interface close to the decoding center, probably blocks exit of the E-site tRNA.</text>
</comment>
<comment type="subunit">
    <text evidence="1">Part of the 30S ribosomal subunit. Contacts proteins S9 and S11.</text>
</comment>
<comment type="similarity">
    <text evidence="1">Belongs to the universal ribosomal protein uS7 family.</text>
</comment>
<evidence type="ECO:0000255" key="1">
    <source>
        <dbReference type="HAMAP-Rule" id="MF_00480"/>
    </source>
</evidence>
<evidence type="ECO:0000305" key="2"/>